<dbReference type="EMBL" id="AP006716">
    <property type="protein sequence ID" value="BAE05581.1"/>
    <property type="molecule type" value="Genomic_DNA"/>
</dbReference>
<dbReference type="RefSeq" id="WP_011276531.1">
    <property type="nucleotide sequence ID" value="NC_007168.1"/>
</dbReference>
<dbReference type="SMR" id="Q4L446"/>
<dbReference type="KEGG" id="sha:SH2272"/>
<dbReference type="eggNOG" id="COG0651">
    <property type="taxonomic scope" value="Bacteria"/>
</dbReference>
<dbReference type="HOGENOM" id="CLU_007100_9_2_9"/>
<dbReference type="OrthoDB" id="9811718at2"/>
<dbReference type="Proteomes" id="UP000000543">
    <property type="component" value="Chromosome"/>
</dbReference>
<dbReference type="GO" id="GO:0005886">
    <property type="term" value="C:plasma membrane"/>
    <property type="evidence" value="ECO:0007669"/>
    <property type="project" value="UniProtKB-SubCell"/>
</dbReference>
<dbReference type="GO" id="GO:0015297">
    <property type="term" value="F:antiporter activity"/>
    <property type="evidence" value="ECO:0007669"/>
    <property type="project" value="UniProtKB-KW"/>
</dbReference>
<dbReference type="GO" id="GO:0008137">
    <property type="term" value="F:NADH dehydrogenase (ubiquinone) activity"/>
    <property type="evidence" value="ECO:0007669"/>
    <property type="project" value="InterPro"/>
</dbReference>
<dbReference type="GO" id="GO:0042773">
    <property type="term" value="P:ATP synthesis coupled electron transport"/>
    <property type="evidence" value="ECO:0007669"/>
    <property type="project" value="InterPro"/>
</dbReference>
<dbReference type="InterPro" id="IPR050586">
    <property type="entry name" value="CPA3_Na-H_Antiporter_D"/>
</dbReference>
<dbReference type="InterPro" id="IPR003918">
    <property type="entry name" value="NADH_UbQ_OxRdtase"/>
</dbReference>
<dbReference type="InterPro" id="IPR001750">
    <property type="entry name" value="ND/Mrp_TM"/>
</dbReference>
<dbReference type="NCBIfam" id="NF009306">
    <property type="entry name" value="PRK12663.1"/>
    <property type="match status" value="1"/>
</dbReference>
<dbReference type="PANTHER" id="PTHR42703:SF1">
    <property type="entry name" value="NA(+)_H(+) ANTIPORTER SUBUNIT D1"/>
    <property type="match status" value="1"/>
</dbReference>
<dbReference type="PANTHER" id="PTHR42703">
    <property type="entry name" value="NADH DEHYDROGENASE"/>
    <property type="match status" value="1"/>
</dbReference>
<dbReference type="Pfam" id="PF00361">
    <property type="entry name" value="Proton_antipo_M"/>
    <property type="match status" value="1"/>
</dbReference>
<dbReference type="PRINTS" id="PR01437">
    <property type="entry name" value="NUOXDRDTASE4"/>
</dbReference>
<comment type="subunit">
    <text evidence="1">May form a heterooligomeric complex that consists of seven subunits: mnhA2, mnhB2, mnhC2, mnhD2, mnhE2, mnhF2 and mnhG2.</text>
</comment>
<comment type="subcellular location">
    <subcellularLocation>
        <location evidence="3">Cell membrane</location>
        <topology evidence="3">Multi-pass membrane protein</topology>
    </subcellularLocation>
</comment>
<comment type="similarity">
    <text evidence="3">Belongs to the CPA3 antiporters (TC 2.A.63) subunit D family.</text>
</comment>
<feature type="chain" id="PRO_0000372245" description="Putative antiporter subunit mnhD2">
    <location>
        <begin position="1"/>
        <end position="499"/>
    </location>
</feature>
<feature type="transmembrane region" description="Helical" evidence="2">
    <location>
        <begin position="3"/>
        <end position="23"/>
    </location>
</feature>
<feature type="transmembrane region" description="Helical" evidence="2">
    <location>
        <begin position="32"/>
        <end position="52"/>
    </location>
</feature>
<feature type="transmembrane region" description="Helical" evidence="2">
    <location>
        <begin position="78"/>
        <end position="98"/>
    </location>
</feature>
<feature type="transmembrane region" description="Helical" evidence="2">
    <location>
        <begin position="108"/>
        <end position="128"/>
    </location>
</feature>
<feature type="transmembrane region" description="Helical" evidence="2">
    <location>
        <begin position="130"/>
        <end position="150"/>
    </location>
</feature>
<feature type="transmembrane region" description="Helical" evidence="2">
    <location>
        <begin position="161"/>
        <end position="181"/>
    </location>
</feature>
<feature type="transmembrane region" description="Helical" evidence="2">
    <location>
        <begin position="206"/>
        <end position="226"/>
    </location>
</feature>
<feature type="transmembrane region" description="Helical" evidence="2">
    <location>
        <begin position="240"/>
        <end position="260"/>
    </location>
</feature>
<feature type="transmembrane region" description="Helical" evidence="2">
    <location>
        <begin position="273"/>
        <end position="293"/>
    </location>
</feature>
<feature type="transmembrane region" description="Helical" evidence="2">
    <location>
        <begin position="308"/>
        <end position="328"/>
    </location>
</feature>
<feature type="transmembrane region" description="Helical" evidence="2">
    <location>
        <begin position="330"/>
        <end position="350"/>
    </location>
</feature>
<feature type="transmembrane region" description="Helical" evidence="2">
    <location>
        <begin position="368"/>
        <end position="388"/>
    </location>
</feature>
<feature type="transmembrane region" description="Helical" evidence="2">
    <location>
        <begin position="403"/>
        <end position="423"/>
    </location>
</feature>
<feature type="transmembrane region" description="Helical" evidence="2">
    <location>
        <begin position="450"/>
        <end position="470"/>
    </location>
</feature>
<proteinExistence type="inferred from homology"/>
<organism>
    <name type="scientific">Staphylococcus haemolyticus (strain JCSC1435)</name>
    <dbReference type="NCBI Taxonomy" id="279808"/>
    <lineage>
        <taxon>Bacteria</taxon>
        <taxon>Bacillati</taxon>
        <taxon>Bacillota</taxon>
        <taxon>Bacilli</taxon>
        <taxon>Bacillales</taxon>
        <taxon>Staphylococcaceae</taxon>
        <taxon>Staphylococcus</taxon>
    </lineage>
</organism>
<accession>Q4L446</accession>
<name>MNHD2_STAHJ</name>
<sequence length="499" mass="54968">MNSNLLVLPILLPLLCALVLVFTKEKNRLSKILYIGTMSVNTVISLCLLIYVLQHKPITLDFGGWAAPYGIQFLGDSLSLVMVTVASFVVTLIMSYGFGRGEDRVNRYYLPTFILFLTTGVIGSFLTSDLFNLYVMFEIMLLASFVLVTLGQSVEQLRAAIIYVVLNIVGSWLFLLGIGLLYKTVGTLNFSQVALRLDQIHDNKAIIIISIVFIVAFGSKAALVLFMWLPKAYAVLNTELAALFAALMTKVGAYALIRFFTLLFDQHTGVTHPLLVFMSCITMLIGAFGVIAYRDIKKVASYQVILSIGFVILGLGSNTFAGVHGAIFYLANDIIVKTMLFFIIGSLVYMSGYREYKYLCGLAKKEPFFGVAFVVMIFAIGGVPPFSGFPGKVLIFQGAIENGNFIGLALMIITSLLAMYSLFRILFIMYFGDNDGEQVDFNPLPKHRKTILGILVAVVLAMGIAAPVVMNATENATKLNMDDNYFHSIVNSHLKEGNK</sequence>
<keyword id="KW-0050">Antiport</keyword>
<keyword id="KW-1003">Cell membrane</keyword>
<keyword id="KW-0406">Ion transport</keyword>
<keyword id="KW-0472">Membrane</keyword>
<keyword id="KW-0812">Transmembrane</keyword>
<keyword id="KW-1133">Transmembrane helix</keyword>
<keyword id="KW-0813">Transport</keyword>
<protein>
    <recommendedName>
        <fullName>Putative antiporter subunit mnhD2</fullName>
    </recommendedName>
    <alternativeName>
        <fullName>Mrp complex subunit D2</fullName>
    </alternativeName>
    <alternativeName>
        <fullName>Putative NADH-ubiquinone oxidoreductase subunit mnhD2</fullName>
    </alternativeName>
</protein>
<gene>
    <name type="primary">mnhD2</name>
    <name type="synonym">mrpD2</name>
    <name type="ordered locus">SH2272</name>
</gene>
<evidence type="ECO:0000250" key="1"/>
<evidence type="ECO:0000255" key="2"/>
<evidence type="ECO:0000305" key="3"/>
<reference key="1">
    <citation type="journal article" date="2005" name="J. Bacteriol.">
        <title>Whole-genome sequencing of Staphylococcus haemolyticus uncovers the extreme plasticity of its genome and the evolution of human-colonizing staphylococcal species.</title>
        <authorList>
            <person name="Takeuchi F."/>
            <person name="Watanabe S."/>
            <person name="Baba T."/>
            <person name="Yuzawa H."/>
            <person name="Ito T."/>
            <person name="Morimoto Y."/>
            <person name="Kuroda M."/>
            <person name="Cui L."/>
            <person name="Takahashi M."/>
            <person name="Ankai A."/>
            <person name="Baba S."/>
            <person name="Fukui S."/>
            <person name="Lee J.C."/>
            <person name="Hiramatsu K."/>
        </authorList>
    </citation>
    <scope>NUCLEOTIDE SEQUENCE [LARGE SCALE GENOMIC DNA]</scope>
    <source>
        <strain>JCSC1435</strain>
    </source>
</reference>